<evidence type="ECO:0000250" key="1"/>
<evidence type="ECO:0000255" key="2"/>
<evidence type="ECO:0000305" key="3"/>
<dbReference type="EC" id="2.4.1.-"/>
<dbReference type="EMBL" id="CR382130">
    <property type="protein sequence ID" value="CAG80582.1"/>
    <property type="molecule type" value="Genomic_DNA"/>
</dbReference>
<dbReference type="RefSeq" id="XP_502394.1">
    <property type="nucleotide sequence ID" value="XM_502394.1"/>
</dbReference>
<dbReference type="FunCoup" id="Q6CAB8">
    <property type="interactions" value="892"/>
</dbReference>
<dbReference type="STRING" id="284591.Q6CAB8"/>
<dbReference type="CAZy" id="GT22">
    <property type="family name" value="Glycosyltransferase Family 22"/>
</dbReference>
<dbReference type="GlyCosmos" id="Q6CAB8">
    <property type="glycosylation" value="1 site, No reported glycans"/>
</dbReference>
<dbReference type="EnsemblFungi" id="CAG80582">
    <property type="protein sequence ID" value="CAG80582"/>
    <property type="gene ID" value="YALI0_D04202g"/>
</dbReference>
<dbReference type="KEGG" id="yli:2910629"/>
<dbReference type="VEuPathDB" id="FungiDB:YALI0_D04202g"/>
<dbReference type="HOGENOM" id="CLU_012353_0_1_1"/>
<dbReference type="InParanoid" id="Q6CAB8"/>
<dbReference type="OMA" id="HHMVFNN"/>
<dbReference type="OrthoDB" id="20366at4891"/>
<dbReference type="UniPathway" id="UPA00196"/>
<dbReference type="Proteomes" id="UP000001300">
    <property type="component" value="Chromosome D"/>
</dbReference>
<dbReference type="GO" id="GO:0005789">
    <property type="term" value="C:endoplasmic reticulum membrane"/>
    <property type="evidence" value="ECO:0000318"/>
    <property type="project" value="GO_Central"/>
</dbReference>
<dbReference type="GO" id="GO:0000026">
    <property type="term" value="F:alpha-1,2-mannosyltransferase activity"/>
    <property type="evidence" value="ECO:0000318"/>
    <property type="project" value="GO_Central"/>
</dbReference>
<dbReference type="GO" id="GO:0006506">
    <property type="term" value="P:GPI anchor biosynthetic process"/>
    <property type="evidence" value="ECO:0000318"/>
    <property type="project" value="GO_Central"/>
</dbReference>
<dbReference type="InterPro" id="IPR005599">
    <property type="entry name" value="GPI_mannosylTrfase"/>
</dbReference>
<dbReference type="PANTHER" id="PTHR22760">
    <property type="entry name" value="GLYCOSYLTRANSFERASE"/>
    <property type="match status" value="1"/>
</dbReference>
<dbReference type="PANTHER" id="PTHR22760:SF4">
    <property type="entry name" value="GPI MANNOSYLTRANSFERASE 3"/>
    <property type="match status" value="1"/>
</dbReference>
<dbReference type="Pfam" id="PF03901">
    <property type="entry name" value="Glyco_transf_22"/>
    <property type="match status" value="1"/>
</dbReference>
<feature type="chain" id="PRO_0000246267" description="GPI mannosyltransferase 3">
    <location>
        <begin position="1"/>
        <end position="510"/>
    </location>
</feature>
<feature type="transmembrane region" description="Helical" evidence="2">
    <location>
        <begin position="17"/>
        <end position="37"/>
    </location>
</feature>
<feature type="transmembrane region" description="Helical" evidence="2">
    <location>
        <begin position="96"/>
        <end position="116"/>
    </location>
</feature>
<feature type="transmembrane region" description="Helical" evidence="2">
    <location>
        <begin position="123"/>
        <end position="143"/>
    </location>
</feature>
<feature type="transmembrane region" description="Helical" evidence="2">
    <location>
        <begin position="145"/>
        <end position="163"/>
    </location>
</feature>
<feature type="transmembrane region" description="Helical" evidence="2">
    <location>
        <begin position="179"/>
        <end position="199"/>
    </location>
</feature>
<feature type="transmembrane region" description="Helical" evidence="2">
    <location>
        <begin position="221"/>
        <end position="241"/>
    </location>
</feature>
<feature type="transmembrane region" description="Helical" evidence="2">
    <location>
        <begin position="269"/>
        <end position="289"/>
    </location>
</feature>
<feature type="transmembrane region" description="Helical" evidence="2">
    <location>
        <begin position="316"/>
        <end position="336"/>
    </location>
</feature>
<feature type="transmembrane region" description="Helical" evidence="2">
    <location>
        <begin position="342"/>
        <end position="362"/>
    </location>
</feature>
<feature type="glycosylation site" description="N-linked (GlcNAc...) asparagine" evidence="2">
    <location>
        <position position="290"/>
    </location>
</feature>
<organism>
    <name type="scientific">Yarrowia lipolytica (strain CLIB 122 / E 150)</name>
    <name type="common">Yeast</name>
    <name type="synonym">Candida lipolytica</name>
    <dbReference type="NCBI Taxonomy" id="284591"/>
    <lineage>
        <taxon>Eukaryota</taxon>
        <taxon>Fungi</taxon>
        <taxon>Dikarya</taxon>
        <taxon>Ascomycota</taxon>
        <taxon>Saccharomycotina</taxon>
        <taxon>Dipodascomycetes</taxon>
        <taxon>Dipodascales</taxon>
        <taxon>Dipodascales incertae sedis</taxon>
        <taxon>Yarrowia</taxon>
    </lineage>
</organism>
<accession>Q6CAB8</accession>
<gene>
    <name type="primary">GPI10</name>
    <name type="ordered locus">YALI0D04202g</name>
</gene>
<proteinExistence type="inferred from homology"/>
<reference key="1">
    <citation type="journal article" date="2004" name="Nature">
        <title>Genome evolution in yeasts.</title>
        <authorList>
            <person name="Dujon B."/>
            <person name="Sherman D."/>
            <person name="Fischer G."/>
            <person name="Durrens P."/>
            <person name="Casaregola S."/>
            <person name="Lafontaine I."/>
            <person name="de Montigny J."/>
            <person name="Marck C."/>
            <person name="Neuveglise C."/>
            <person name="Talla E."/>
            <person name="Goffard N."/>
            <person name="Frangeul L."/>
            <person name="Aigle M."/>
            <person name="Anthouard V."/>
            <person name="Babour A."/>
            <person name="Barbe V."/>
            <person name="Barnay S."/>
            <person name="Blanchin S."/>
            <person name="Beckerich J.-M."/>
            <person name="Beyne E."/>
            <person name="Bleykasten C."/>
            <person name="Boisrame A."/>
            <person name="Boyer J."/>
            <person name="Cattolico L."/>
            <person name="Confanioleri F."/>
            <person name="de Daruvar A."/>
            <person name="Despons L."/>
            <person name="Fabre E."/>
            <person name="Fairhead C."/>
            <person name="Ferry-Dumazet H."/>
            <person name="Groppi A."/>
            <person name="Hantraye F."/>
            <person name="Hennequin C."/>
            <person name="Jauniaux N."/>
            <person name="Joyet P."/>
            <person name="Kachouri R."/>
            <person name="Kerrest A."/>
            <person name="Koszul R."/>
            <person name="Lemaire M."/>
            <person name="Lesur I."/>
            <person name="Ma L."/>
            <person name="Muller H."/>
            <person name="Nicaud J.-M."/>
            <person name="Nikolski M."/>
            <person name="Oztas S."/>
            <person name="Ozier-Kalogeropoulos O."/>
            <person name="Pellenz S."/>
            <person name="Potier S."/>
            <person name="Richard G.-F."/>
            <person name="Straub M.-L."/>
            <person name="Suleau A."/>
            <person name="Swennen D."/>
            <person name="Tekaia F."/>
            <person name="Wesolowski-Louvel M."/>
            <person name="Westhof E."/>
            <person name="Wirth B."/>
            <person name="Zeniou-Meyer M."/>
            <person name="Zivanovic Y."/>
            <person name="Bolotin-Fukuhara M."/>
            <person name="Thierry A."/>
            <person name="Bouchier C."/>
            <person name="Caudron B."/>
            <person name="Scarpelli C."/>
            <person name="Gaillardin C."/>
            <person name="Weissenbach J."/>
            <person name="Wincker P."/>
            <person name="Souciet J.-L."/>
        </authorList>
    </citation>
    <scope>NUCLEOTIDE SEQUENCE [LARGE SCALE GENOMIC DNA]</scope>
    <source>
        <strain>CLIB 122 / E 150</strain>
    </source>
</reference>
<sequence length="510" mass="58336">MMQHKEIKHPYQGIKYTVLVVIAAFRVANALTTKTFFQPDEYWQSLEPAHRLAYGYGYLTWEWHEGLRSSLPPLVGAGIYKALQLLGLDDPRIVRIAPKIVMALFASAGDVYTWKLSARLQGPAEAPWALFVSLLSAFNWFFLTRTFSNSAEMVLTAVALNYWSFNGKEVNFKRLSVALFIGAISCVLRPTNAILWAVLGLHLVLTTTAKMRVLWLAVRNVALVFAATYYIDYLYYGEPVFPLLNFLKFNLLQSLAHFYGTSPTLYYFYEALPLLTVGWLPLTLWGLWINRSQVLVKAALAVVVAFSLIRHKEVRFIYPLVPILHMAAAEAITQTPKKLRKWLVWSLALVNILVAGYFSQVHQRGVVDVVEYLSTEPQVTSVGFLMPCHSTPYQSHLHRDIPVWFLTCEPPIGFTAEEQMTYRDQADQFYDDPLQFVQTQFPESVAVSAREARTPLFHPSHLAIFESLEKKSPEVIEHLVELGYKRGKTFFNSHFHDDWRREGDVVVYNL</sequence>
<comment type="function">
    <text evidence="1">Mannosyltransferase involved in glycosylphosphatidylinositol-anchor biosynthesis. Transfers the third mannose to Man2-GlcN-acyl-PI during GPI precursor assembly (By similarity).</text>
</comment>
<comment type="pathway">
    <text>Glycolipid biosynthesis; glycosylphosphatidylinositol-anchor biosynthesis.</text>
</comment>
<comment type="subcellular location">
    <subcellularLocation>
        <location evidence="1">Endoplasmic reticulum membrane</location>
        <topology evidence="1">Multi-pass membrane protein</topology>
    </subcellularLocation>
</comment>
<comment type="similarity">
    <text evidence="3">Belongs to the glycosyltransferase 22 family. PIGB subfamily.</text>
</comment>
<name>GPI10_YARLI</name>
<keyword id="KW-0256">Endoplasmic reticulum</keyword>
<keyword id="KW-0325">Glycoprotein</keyword>
<keyword id="KW-0328">Glycosyltransferase</keyword>
<keyword id="KW-0337">GPI-anchor biosynthesis</keyword>
<keyword id="KW-0472">Membrane</keyword>
<keyword id="KW-1185">Reference proteome</keyword>
<keyword id="KW-0808">Transferase</keyword>
<keyword id="KW-0812">Transmembrane</keyword>
<keyword id="KW-1133">Transmembrane helix</keyword>
<protein>
    <recommendedName>
        <fullName>GPI mannosyltransferase 3</fullName>
        <ecNumber>2.4.1.-</ecNumber>
    </recommendedName>
    <alternativeName>
        <fullName>GPI mannosyltransferase III</fullName>
        <shortName>GPI-MT-III</shortName>
    </alternativeName>
    <alternativeName>
        <fullName>Glycosylphosphatidylinositol-anchor biosynthesis protein 10</fullName>
    </alternativeName>
</protein>